<proteinExistence type="inferred from homology"/>
<sequence length="148" mass="15256">MFDVTLLILLGLAALGFISHNTTVAVSILVLIIVRVTPLSTFFPWIEKQGLSIGIIILTIGVMAPIASGTLPPSTLIHSFLNWKSLVAIAVGVIVSWLGGRGVTLMGSQPQLVAGLLVGTVLGVALFRGVPVGPLIAAGLVSLIVGKQ</sequence>
<reference key="1">
    <citation type="journal article" date="2002" name="Proc. Natl. Acad. Sci. U.S.A.">
        <title>Extensive mosaic structure revealed by the complete genome sequence of uropathogenic Escherichia coli.</title>
        <authorList>
            <person name="Welch R.A."/>
            <person name="Burland V."/>
            <person name="Plunkett G. III"/>
            <person name="Redford P."/>
            <person name="Roesch P."/>
            <person name="Rasko D."/>
            <person name="Buckles E.L."/>
            <person name="Liou S.-R."/>
            <person name="Boutin A."/>
            <person name="Hackett J."/>
            <person name="Stroud D."/>
            <person name="Mayhew G.F."/>
            <person name="Rose D.J."/>
            <person name="Zhou S."/>
            <person name="Schwartz D.C."/>
            <person name="Perna N.T."/>
            <person name="Mobley H.L.T."/>
            <person name="Donnenberg M.S."/>
            <person name="Blattner F.R."/>
        </authorList>
    </citation>
    <scope>NUCLEOTIDE SEQUENCE [LARGE SCALE GENOMIC DNA]</scope>
    <source>
        <strain>CFT073 / ATCC 700928 / UPEC</strain>
    </source>
</reference>
<gene>
    <name evidence="1" type="primary">yeaL</name>
    <name type="ordered locus">c2194</name>
</gene>
<comment type="subcellular location">
    <subcellularLocation>
        <location evidence="1">Cell membrane</location>
        <topology evidence="1">Multi-pass membrane protein</topology>
    </subcellularLocation>
</comment>
<comment type="similarity">
    <text evidence="1">Belongs to the UPF0756 family.</text>
</comment>
<evidence type="ECO:0000255" key="1">
    <source>
        <dbReference type="HAMAP-Rule" id="MF_01874"/>
    </source>
</evidence>
<accession>P0ACY7</accession>
<accession>O07965</accession>
<accession>O07967</accession>
<accession>P76240</accession>
<protein>
    <recommendedName>
        <fullName evidence="1">UPF0756 membrane protein YeaL</fullName>
    </recommendedName>
</protein>
<name>YEAL_ECOL6</name>
<dbReference type="EMBL" id="AE014075">
    <property type="protein sequence ID" value="AAN80653.1"/>
    <property type="molecule type" value="Genomic_DNA"/>
</dbReference>
<dbReference type="RefSeq" id="WP_000460707.1">
    <property type="nucleotide sequence ID" value="NZ_CP051263.1"/>
</dbReference>
<dbReference type="STRING" id="199310.c2194"/>
<dbReference type="KEGG" id="ecc:c2194"/>
<dbReference type="eggNOG" id="COG2707">
    <property type="taxonomic scope" value="Bacteria"/>
</dbReference>
<dbReference type="HOGENOM" id="CLU_125889_0_0_6"/>
<dbReference type="BioCyc" id="ECOL199310:C2194-MONOMER"/>
<dbReference type="Proteomes" id="UP000001410">
    <property type="component" value="Chromosome"/>
</dbReference>
<dbReference type="GO" id="GO:0005886">
    <property type="term" value="C:plasma membrane"/>
    <property type="evidence" value="ECO:0007669"/>
    <property type="project" value="UniProtKB-SubCell"/>
</dbReference>
<dbReference type="HAMAP" id="MF_01874">
    <property type="entry name" value="UPF0756"/>
    <property type="match status" value="1"/>
</dbReference>
<dbReference type="InterPro" id="IPR007382">
    <property type="entry name" value="UPF0756_TM"/>
</dbReference>
<dbReference type="PANTHER" id="PTHR38452">
    <property type="entry name" value="UPF0756 MEMBRANE PROTEIN YEAL"/>
    <property type="match status" value="1"/>
</dbReference>
<dbReference type="PANTHER" id="PTHR38452:SF1">
    <property type="entry name" value="UPF0756 MEMBRANE PROTEIN YEAL"/>
    <property type="match status" value="1"/>
</dbReference>
<dbReference type="Pfam" id="PF04284">
    <property type="entry name" value="DUF441"/>
    <property type="match status" value="1"/>
</dbReference>
<keyword id="KW-1003">Cell membrane</keyword>
<keyword id="KW-0472">Membrane</keyword>
<keyword id="KW-1185">Reference proteome</keyword>
<keyword id="KW-0812">Transmembrane</keyword>
<keyword id="KW-1133">Transmembrane helix</keyword>
<organism>
    <name type="scientific">Escherichia coli O6:H1 (strain CFT073 / ATCC 700928 / UPEC)</name>
    <dbReference type="NCBI Taxonomy" id="199310"/>
    <lineage>
        <taxon>Bacteria</taxon>
        <taxon>Pseudomonadati</taxon>
        <taxon>Pseudomonadota</taxon>
        <taxon>Gammaproteobacteria</taxon>
        <taxon>Enterobacterales</taxon>
        <taxon>Enterobacteriaceae</taxon>
        <taxon>Escherichia</taxon>
    </lineage>
</organism>
<feature type="chain" id="PRO_0000169020" description="UPF0756 membrane protein YeaL">
    <location>
        <begin position="1"/>
        <end position="148"/>
    </location>
</feature>
<feature type="transmembrane region" description="Helical" evidence="1">
    <location>
        <begin position="14"/>
        <end position="34"/>
    </location>
</feature>
<feature type="transmembrane region" description="Helical" evidence="1">
    <location>
        <begin position="51"/>
        <end position="71"/>
    </location>
</feature>
<feature type="transmembrane region" description="Helical" evidence="1">
    <location>
        <begin position="86"/>
        <end position="106"/>
    </location>
</feature>
<feature type="transmembrane region" description="Helical" evidence="1">
    <location>
        <begin position="121"/>
        <end position="141"/>
    </location>
</feature>